<protein>
    <recommendedName>
        <fullName>Uncharacterized protein 042R</fullName>
    </recommendedName>
</protein>
<proteinExistence type="predicted"/>
<feature type="chain" id="PRO_0000377968" description="Uncharacterized protein 042R">
    <location>
        <begin position="1"/>
        <end position="94"/>
    </location>
</feature>
<feature type="region of interest" description="Disordered" evidence="2">
    <location>
        <begin position="1"/>
        <end position="22"/>
    </location>
</feature>
<feature type="coiled-coil region" evidence="1">
    <location>
        <begin position="1"/>
        <end position="77"/>
    </location>
</feature>
<accession>Q91G56</accession>
<keyword id="KW-0175">Coiled coil</keyword>
<keyword id="KW-1185">Reference proteome</keyword>
<sequence length="94" mass="11074">MATLQQAQQQNNQLTQQNNQLTQQNNQLTQRVNELTRFLEDANRKIQIKENVIKSSEAENRKNLAEINRLHSENHRLIQQSTRTICQKCSMRSN</sequence>
<dbReference type="EMBL" id="AF303741">
    <property type="protein sequence ID" value="AAK81976.1"/>
    <property type="molecule type" value="Genomic_DNA"/>
</dbReference>
<dbReference type="RefSeq" id="NP_149505.1">
    <property type="nucleotide sequence ID" value="NC_003038.1"/>
</dbReference>
<dbReference type="SMR" id="Q91G56"/>
<dbReference type="KEGG" id="vg:1733264"/>
<dbReference type="OrthoDB" id="38143at10239"/>
<dbReference type="Proteomes" id="UP000001359">
    <property type="component" value="Genome"/>
</dbReference>
<evidence type="ECO:0000255" key="1"/>
<evidence type="ECO:0000256" key="2">
    <source>
        <dbReference type="SAM" id="MobiDB-lite"/>
    </source>
</evidence>
<name>042R_IIV6</name>
<organismHost>
    <name type="scientific">Acheta domesticus</name>
    <name type="common">House cricket</name>
    <dbReference type="NCBI Taxonomy" id="6997"/>
</organismHost>
<organismHost>
    <name type="scientific">Chilo suppressalis</name>
    <name type="common">Asiatic rice borer moth</name>
    <dbReference type="NCBI Taxonomy" id="168631"/>
</organismHost>
<organismHost>
    <name type="scientific">Gryllus bimaculatus</name>
    <name type="common">Two-spotted cricket</name>
    <dbReference type="NCBI Taxonomy" id="6999"/>
</organismHost>
<organismHost>
    <name type="scientific">Gryllus campestris</name>
    <dbReference type="NCBI Taxonomy" id="58607"/>
</organismHost>
<organismHost>
    <name type="scientific">Spodoptera frugiperda</name>
    <name type="common">Fall armyworm</name>
    <dbReference type="NCBI Taxonomy" id="7108"/>
</organismHost>
<reference key="1">
    <citation type="journal article" date="2001" name="Virology">
        <title>Analysis of the first complete DNA sequence of an invertebrate iridovirus: coding strategy of the genome of Chilo iridescent virus.</title>
        <authorList>
            <person name="Jakob N.J."/>
            <person name="Mueller K."/>
            <person name="Bahr U."/>
            <person name="Darai G."/>
        </authorList>
    </citation>
    <scope>NUCLEOTIDE SEQUENCE [LARGE SCALE GENOMIC DNA]</scope>
</reference>
<reference key="2">
    <citation type="journal article" date="2007" name="Virol. J.">
        <title>Comparative genomic analysis of the family Iridoviridae: re-annotating and defining the core set of iridovirus genes.</title>
        <authorList>
            <person name="Eaton H.E."/>
            <person name="Metcalf J."/>
            <person name="Penny E."/>
            <person name="Tcherepanov V."/>
            <person name="Upton C."/>
            <person name="Brunetti C.R."/>
        </authorList>
    </citation>
    <scope>GENOME REANNOTATION</scope>
</reference>
<gene>
    <name type="ORF">IIV6-042R</name>
</gene>
<organism>
    <name type="scientific">Invertebrate iridescent virus 6</name>
    <name type="common">IIV-6</name>
    <name type="synonym">Chilo iridescent virus</name>
    <dbReference type="NCBI Taxonomy" id="176652"/>
    <lineage>
        <taxon>Viruses</taxon>
        <taxon>Varidnaviria</taxon>
        <taxon>Bamfordvirae</taxon>
        <taxon>Nucleocytoviricota</taxon>
        <taxon>Megaviricetes</taxon>
        <taxon>Pimascovirales</taxon>
        <taxon>Iridoviridae</taxon>
        <taxon>Betairidovirinae</taxon>
        <taxon>Iridovirus</taxon>
    </lineage>
</organism>